<proteinExistence type="inferred from homology"/>
<accession>B8GYH3</accession>
<reference key="1">
    <citation type="journal article" date="2010" name="J. Bacteriol.">
        <title>The genetic basis of laboratory adaptation in Caulobacter crescentus.</title>
        <authorList>
            <person name="Marks M.E."/>
            <person name="Castro-Rojas C.M."/>
            <person name="Teiling C."/>
            <person name="Du L."/>
            <person name="Kapatral V."/>
            <person name="Walunas T.L."/>
            <person name="Crosson S."/>
        </authorList>
    </citation>
    <scope>NUCLEOTIDE SEQUENCE [LARGE SCALE GENOMIC DNA]</scope>
    <source>
        <strain>NA1000 / CB15N</strain>
    </source>
</reference>
<organism>
    <name type="scientific">Caulobacter vibrioides (strain NA1000 / CB15N)</name>
    <name type="common">Caulobacter crescentus</name>
    <dbReference type="NCBI Taxonomy" id="565050"/>
    <lineage>
        <taxon>Bacteria</taxon>
        <taxon>Pseudomonadati</taxon>
        <taxon>Pseudomonadota</taxon>
        <taxon>Alphaproteobacteria</taxon>
        <taxon>Caulobacterales</taxon>
        <taxon>Caulobacteraceae</taxon>
        <taxon>Caulobacter</taxon>
    </lineage>
</organism>
<protein>
    <recommendedName>
        <fullName evidence="1">Tetraacyldisaccharide 4'-kinase</fullName>
        <ecNumber evidence="1">2.7.1.130</ecNumber>
    </recommendedName>
    <alternativeName>
        <fullName evidence="1">Lipid A 4'-kinase</fullName>
    </alternativeName>
</protein>
<comment type="function">
    <text evidence="1">Transfers the gamma-phosphate of ATP to the 4'-position of a tetraacyldisaccharide 1-phosphate intermediate (termed DS-1-P) to form tetraacyldisaccharide 1,4'-bis-phosphate (lipid IVA).</text>
</comment>
<comment type="catalytic activity">
    <reaction evidence="1">
        <text>a lipid A disaccharide + ATP = a lipid IVA + ADP + H(+)</text>
        <dbReference type="Rhea" id="RHEA:67840"/>
        <dbReference type="ChEBI" id="CHEBI:15378"/>
        <dbReference type="ChEBI" id="CHEBI:30616"/>
        <dbReference type="ChEBI" id="CHEBI:176343"/>
        <dbReference type="ChEBI" id="CHEBI:176425"/>
        <dbReference type="ChEBI" id="CHEBI:456216"/>
        <dbReference type="EC" id="2.7.1.130"/>
    </reaction>
</comment>
<comment type="pathway">
    <text evidence="1">Glycolipid biosynthesis; lipid IV(A) biosynthesis; lipid IV(A) from (3R)-3-hydroxytetradecanoyl-[acyl-carrier-protein] and UDP-N-acetyl-alpha-D-glucosamine: step 6/6.</text>
</comment>
<comment type="similarity">
    <text evidence="1">Belongs to the LpxK family.</text>
</comment>
<keyword id="KW-0067">ATP-binding</keyword>
<keyword id="KW-0418">Kinase</keyword>
<keyword id="KW-0441">Lipid A biosynthesis</keyword>
<keyword id="KW-0444">Lipid biosynthesis</keyword>
<keyword id="KW-0443">Lipid metabolism</keyword>
<keyword id="KW-0547">Nucleotide-binding</keyword>
<keyword id="KW-1185">Reference proteome</keyword>
<keyword id="KW-0808">Transferase</keyword>
<feature type="chain" id="PRO_1000134736" description="Tetraacyldisaccharide 4'-kinase">
    <location>
        <begin position="1"/>
        <end position="335"/>
    </location>
</feature>
<feature type="binding site" evidence="1">
    <location>
        <begin position="58"/>
        <end position="65"/>
    </location>
    <ligand>
        <name>ATP</name>
        <dbReference type="ChEBI" id="CHEBI:30616"/>
    </ligand>
</feature>
<name>LPXK_CAUVN</name>
<sequence>MKLGTPRWWYVKSGAPAPVTRALLTPLSWLWADTTRRRIARATPAIVGAPVICVGNVTMGGAGKTPIVRELLLTLTQRGVAAHGLSRGYGGKLKGPVRVDTIRHTAADVGDEPLMLAQDFPMWIAADRVAGAKAAVRAGASAIVMDDGHQNPSVKKALSLVVVDGETRGGEWPFGDGRVFPAGPMREPLKVGLSRADAVIVLLPVDVEQPDFDLLVAFGDMPVLVARLEAAAPVPKGPQVGFAGIAKPWKVEKALTAAGCQLVDFAPFPDHGAYSESTLKMLADRAEVYEAGLVTTEKDWVRLPPAWRERVTPWPVRARFEDPAALEALLKGIGL</sequence>
<gene>
    <name evidence="1" type="primary">lpxK</name>
    <name type="ordered locus">CCNA_00303</name>
</gene>
<evidence type="ECO:0000255" key="1">
    <source>
        <dbReference type="HAMAP-Rule" id="MF_00409"/>
    </source>
</evidence>
<dbReference type="EC" id="2.7.1.130" evidence="1"/>
<dbReference type="EMBL" id="CP001340">
    <property type="protein sequence ID" value="ACL93770.1"/>
    <property type="molecule type" value="Genomic_DNA"/>
</dbReference>
<dbReference type="RefSeq" id="WP_010918190.1">
    <property type="nucleotide sequence ID" value="NC_011916.1"/>
</dbReference>
<dbReference type="RefSeq" id="YP_002515678.1">
    <property type="nucleotide sequence ID" value="NC_011916.1"/>
</dbReference>
<dbReference type="SMR" id="B8GYH3"/>
<dbReference type="GeneID" id="7330756"/>
<dbReference type="KEGG" id="ccs:CCNA_00303"/>
<dbReference type="PATRIC" id="fig|565050.3.peg.300"/>
<dbReference type="HOGENOM" id="CLU_038816_0_0_5"/>
<dbReference type="OrthoDB" id="9766423at2"/>
<dbReference type="PhylomeDB" id="B8GYH3"/>
<dbReference type="UniPathway" id="UPA00359">
    <property type="reaction ID" value="UER00482"/>
</dbReference>
<dbReference type="Proteomes" id="UP000001364">
    <property type="component" value="Chromosome"/>
</dbReference>
<dbReference type="GO" id="GO:0005886">
    <property type="term" value="C:plasma membrane"/>
    <property type="evidence" value="ECO:0007669"/>
    <property type="project" value="TreeGrafter"/>
</dbReference>
<dbReference type="GO" id="GO:0005524">
    <property type="term" value="F:ATP binding"/>
    <property type="evidence" value="ECO:0007669"/>
    <property type="project" value="UniProtKB-UniRule"/>
</dbReference>
<dbReference type="GO" id="GO:0009029">
    <property type="term" value="F:tetraacyldisaccharide 4'-kinase activity"/>
    <property type="evidence" value="ECO:0007669"/>
    <property type="project" value="UniProtKB-UniRule"/>
</dbReference>
<dbReference type="GO" id="GO:0009245">
    <property type="term" value="P:lipid A biosynthetic process"/>
    <property type="evidence" value="ECO:0007669"/>
    <property type="project" value="UniProtKB-UniRule"/>
</dbReference>
<dbReference type="GO" id="GO:0009244">
    <property type="term" value="P:lipopolysaccharide core region biosynthetic process"/>
    <property type="evidence" value="ECO:0007669"/>
    <property type="project" value="TreeGrafter"/>
</dbReference>
<dbReference type="HAMAP" id="MF_00409">
    <property type="entry name" value="LpxK"/>
    <property type="match status" value="1"/>
</dbReference>
<dbReference type="InterPro" id="IPR003758">
    <property type="entry name" value="LpxK"/>
</dbReference>
<dbReference type="InterPro" id="IPR027417">
    <property type="entry name" value="P-loop_NTPase"/>
</dbReference>
<dbReference type="NCBIfam" id="TIGR00682">
    <property type="entry name" value="lpxK"/>
    <property type="match status" value="1"/>
</dbReference>
<dbReference type="PANTHER" id="PTHR42724">
    <property type="entry name" value="TETRAACYLDISACCHARIDE 4'-KINASE"/>
    <property type="match status" value="1"/>
</dbReference>
<dbReference type="PANTHER" id="PTHR42724:SF1">
    <property type="entry name" value="TETRAACYLDISACCHARIDE 4'-KINASE, MITOCHONDRIAL-RELATED"/>
    <property type="match status" value="1"/>
</dbReference>
<dbReference type="Pfam" id="PF02606">
    <property type="entry name" value="LpxK"/>
    <property type="match status" value="1"/>
</dbReference>
<dbReference type="SUPFAM" id="SSF52540">
    <property type="entry name" value="P-loop containing nucleoside triphosphate hydrolases"/>
    <property type="match status" value="1"/>
</dbReference>